<protein>
    <recommendedName>
        <fullName evidence="1">Tryptophan 2,3-dioxygenase</fullName>
        <shortName evidence="1">TDO</shortName>
        <ecNumber evidence="1">1.13.11.11</ecNumber>
    </recommendedName>
    <alternativeName>
        <fullName evidence="1">Tryptamin 2,3-dioxygenase</fullName>
    </alternativeName>
    <alternativeName>
        <fullName evidence="1">Tryptophan oxygenase</fullName>
        <shortName evidence="1">TO</shortName>
        <shortName evidence="1">TRPO</shortName>
    </alternativeName>
    <alternativeName>
        <fullName evidence="1">Tryptophan pyrrolase</fullName>
    </alternativeName>
    <alternativeName>
        <fullName evidence="1">Tryptophanase</fullName>
    </alternativeName>
</protein>
<accession>Q39DG2</accession>
<comment type="function">
    <text evidence="1">Heme-dependent dioxygenase that catalyzes the oxidative cleavage of the L-tryptophan (L-Trp) pyrrole ring and converts L-tryptophan to N-formyl-L-kynurenine. Catalyzes the oxidative cleavage of the indole moiety.</text>
</comment>
<comment type="catalytic activity">
    <reaction evidence="1">
        <text>L-tryptophan + O2 = N-formyl-L-kynurenine</text>
        <dbReference type="Rhea" id="RHEA:24536"/>
        <dbReference type="ChEBI" id="CHEBI:15379"/>
        <dbReference type="ChEBI" id="CHEBI:57912"/>
        <dbReference type="ChEBI" id="CHEBI:58629"/>
        <dbReference type="EC" id="1.13.11.11"/>
    </reaction>
</comment>
<comment type="cofactor">
    <cofactor evidence="1">
        <name>heme</name>
        <dbReference type="ChEBI" id="CHEBI:30413"/>
    </cofactor>
    <text evidence="1">Binds 1 heme group per subunit.</text>
</comment>
<comment type="pathway">
    <text evidence="1">Amino-acid degradation; L-tryptophan degradation via kynurenine pathway; L-kynurenine from L-tryptophan: step 1/2.</text>
</comment>
<comment type="subunit">
    <text evidence="1">Homotetramer.</text>
</comment>
<comment type="similarity">
    <text evidence="1">Belongs to the tryptophan 2,3-dioxygenase family.</text>
</comment>
<gene>
    <name evidence="1" type="primary">kynA</name>
    <name type="ordered locus">Bcep18194_A5910</name>
</gene>
<sequence>MQPPGEDAPAGCPFSGARAAHSAPAAPAAHEASHVPGDAGWHNAQLDFSKSMSYGDYLSLNSILDAQHPLSPDHNEMLFIIQHQTSELWMKLALFELRGALDAVRTDALPPAFKMLARVSRILEQLVQAWSVLSTMTPSEYSAMRPYLGQSSGFQSYQYRQLEFLLGNKNVQMLQPHAHRPDILEQVRATLEAPSFYDEVVRLLARRGFPIAAERLERDWTQPTRHDETVEAAWLEVYRHPQQHWELYEMAEELVDLEDAFRQWRFRHVTTVERIIGFKQGTGGTSGAPYLRKMLDVVLFPELWHVRTTL</sequence>
<name>T23O_BURL3</name>
<reference key="1">
    <citation type="submission" date="2005-10" db="EMBL/GenBank/DDBJ databases">
        <title>Complete sequence of chromosome 1 of Burkholderia sp. 383.</title>
        <authorList>
            <consortium name="US DOE Joint Genome Institute"/>
            <person name="Copeland A."/>
            <person name="Lucas S."/>
            <person name="Lapidus A."/>
            <person name="Barry K."/>
            <person name="Detter J.C."/>
            <person name="Glavina T."/>
            <person name="Hammon N."/>
            <person name="Israni S."/>
            <person name="Pitluck S."/>
            <person name="Chain P."/>
            <person name="Malfatti S."/>
            <person name="Shin M."/>
            <person name="Vergez L."/>
            <person name="Schmutz J."/>
            <person name="Larimer F."/>
            <person name="Land M."/>
            <person name="Kyrpides N."/>
            <person name="Lykidis A."/>
            <person name="Richardson P."/>
        </authorList>
    </citation>
    <scope>NUCLEOTIDE SEQUENCE [LARGE SCALE GENOMIC DNA]</scope>
    <source>
        <strain>ATCC 17760 / DSM 23089 / LMG 22485 / NCIMB 9086 / R18194 / 383</strain>
    </source>
</reference>
<keyword id="KW-0223">Dioxygenase</keyword>
<keyword id="KW-0349">Heme</keyword>
<keyword id="KW-0408">Iron</keyword>
<keyword id="KW-0479">Metal-binding</keyword>
<keyword id="KW-0560">Oxidoreductase</keyword>
<keyword id="KW-0823">Tryptophan catabolism</keyword>
<dbReference type="EC" id="1.13.11.11" evidence="1"/>
<dbReference type="EMBL" id="CP000151">
    <property type="protein sequence ID" value="ABB09504.1"/>
    <property type="molecule type" value="Genomic_DNA"/>
</dbReference>
<dbReference type="RefSeq" id="WP_011353020.1">
    <property type="nucleotide sequence ID" value="NC_007510.1"/>
</dbReference>
<dbReference type="SMR" id="Q39DG2"/>
<dbReference type="GeneID" id="45095793"/>
<dbReference type="KEGG" id="bur:Bcep18194_A5910"/>
<dbReference type="PATRIC" id="fig|482957.22.peg.2902"/>
<dbReference type="HOGENOM" id="CLU_063240_0_0_4"/>
<dbReference type="UniPathway" id="UPA00333">
    <property type="reaction ID" value="UER00453"/>
</dbReference>
<dbReference type="Proteomes" id="UP000002705">
    <property type="component" value="Chromosome 1"/>
</dbReference>
<dbReference type="GO" id="GO:0020037">
    <property type="term" value="F:heme binding"/>
    <property type="evidence" value="ECO:0000250"/>
    <property type="project" value="UniProtKB"/>
</dbReference>
<dbReference type="GO" id="GO:0046872">
    <property type="term" value="F:metal ion binding"/>
    <property type="evidence" value="ECO:0007669"/>
    <property type="project" value="UniProtKB-KW"/>
</dbReference>
<dbReference type="GO" id="GO:0004833">
    <property type="term" value="F:tryptophan 2,3-dioxygenase activity"/>
    <property type="evidence" value="ECO:0000250"/>
    <property type="project" value="UniProtKB"/>
</dbReference>
<dbReference type="GO" id="GO:0019442">
    <property type="term" value="P:L-tryptophan catabolic process to acetyl-CoA"/>
    <property type="evidence" value="ECO:0007669"/>
    <property type="project" value="TreeGrafter"/>
</dbReference>
<dbReference type="GO" id="GO:0019441">
    <property type="term" value="P:L-tryptophan catabolic process to kynurenine"/>
    <property type="evidence" value="ECO:0000250"/>
    <property type="project" value="UniProtKB"/>
</dbReference>
<dbReference type="FunFam" id="1.20.58.480:FF:000001">
    <property type="entry name" value="Tryptophan 2,3-dioxygenase"/>
    <property type="match status" value="1"/>
</dbReference>
<dbReference type="Gene3D" id="1.20.58.480">
    <property type="match status" value="1"/>
</dbReference>
<dbReference type="HAMAP" id="MF_01972">
    <property type="entry name" value="T23O"/>
    <property type="match status" value="1"/>
</dbReference>
<dbReference type="InterPro" id="IPR037217">
    <property type="entry name" value="Trp/Indoleamine_2_3_dOase-like"/>
</dbReference>
<dbReference type="InterPro" id="IPR017485">
    <property type="entry name" value="Trp_2-3-dOase_bac"/>
</dbReference>
<dbReference type="InterPro" id="IPR004981">
    <property type="entry name" value="Trp_2_3_dOase"/>
</dbReference>
<dbReference type="NCBIfam" id="TIGR03036">
    <property type="entry name" value="trp_2_3_diox"/>
    <property type="match status" value="1"/>
</dbReference>
<dbReference type="PANTHER" id="PTHR10138">
    <property type="entry name" value="TRYPTOPHAN 2,3-DIOXYGENASE"/>
    <property type="match status" value="1"/>
</dbReference>
<dbReference type="PANTHER" id="PTHR10138:SF0">
    <property type="entry name" value="TRYPTOPHAN 2,3-DIOXYGENASE"/>
    <property type="match status" value="1"/>
</dbReference>
<dbReference type="Pfam" id="PF03301">
    <property type="entry name" value="Trp_dioxygenase"/>
    <property type="match status" value="1"/>
</dbReference>
<dbReference type="SUPFAM" id="SSF140959">
    <property type="entry name" value="Indolic compounds 2,3-dioxygenase-like"/>
    <property type="match status" value="1"/>
</dbReference>
<organism>
    <name type="scientific">Burkholderia lata (strain ATCC 17760 / DSM 23089 / LMG 22485 / NCIMB 9086 / R18194 / 383)</name>
    <dbReference type="NCBI Taxonomy" id="482957"/>
    <lineage>
        <taxon>Bacteria</taxon>
        <taxon>Pseudomonadati</taxon>
        <taxon>Pseudomonadota</taxon>
        <taxon>Betaproteobacteria</taxon>
        <taxon>Burkholderiales</taxon>
        <taxon>Burkholderiaceae</taxon>
        <taxon>Burkholderia</taxon>
        <taxon>Burkholderia cepacia complex</taxon>
    </lineage>
</organism>
<evidence type="ECO:0000255" key="1">
    <source>
        <dbReference type="HAMAP-Rule" id="MF_01972"/>
    </source>
</evidence>
<evidence type="ECO:0000256" key="2">
    <source>
        <dbReference type="SAM" id="MobiDB-lite"/>
    </source>
</evidence>
<proteinExistence type="inferred from homology"/>
<feature type="chain" id="PRO_0000360112" description="Tryptophan 2,3-dioxygenase">
    <location>
        <begin position="1"/>
        <end position="310"/>
    </location>
</feature>
<feature type="region of interest" description="Disordered" evidence="2">
    <location>
        <begin position="1"/>
        <end position="36"/>
    </location>
</feature>
<feature type="compositionally biased region" description="Low complexity" evidence="2">
    <location>
        <begin position="15"/>
        <end position="36"/>
    </location>
</feature>
<feature type="binding site" evidence="1">
    <location>
        <begin position="79"/>
        <end position="83"/>
    </location>
    <ligand>
        <name>substrate</name>
    </ligand>
</feature>
<feature type="binding site" evidence="1">
    <location>
        <position position="141"/>
    </location>
    <ligand>
        <name>substrate</name>
    </ligand>
</feature>
<feature type="binding site" evidence="1">
    <location>
        <position position="145"/>
    </location>
    <ligand>
        <name>substrate</name>
    </ligand>
</feature>
<feature type="binding site" description="axial binding residue" evidence="1">
    <location>
        <position position="268"/>
    </location>
    <ligand>
        <name>heme</name>
        <dbReference type="ChEBI" id="CHEBI:30413"/>
    </ligand>
    <ligandPart>
        <name>Fe</name>
        <dbReference type="ChEBI" id="CHEBI:18248"/>
    </ligandPart>
</feature>
<feature type="binding site" evidence="1">
    <location>
        <position position="282"/>
    </location>
    <ligand>
        <name>substrate</name>
    </ligand>
</feature>